<keyword id="KW-0963">Cytoplasm</keyword>
<keyword id="KW-0274">FAD</keyword>
<keyword id="KW-0285">Flavoprotein</keyword>
<keyword id="KW-0511">Multifunctional enzyme</keyword>
<keyword id="KW-0560">Oxidoreductase</keyword>
<keyword id="KW-1185">Reference proteome</keyword>
<keyword id="KW-0704">Schiff base</keyword>
<keyword id="KW-0784">Thiamine biosynthesis</keyword>
<keyword id="KW-0808">Transferase</keyword>
<name>THIOG_NOSS1</name>
<comment type="function">
    <text evidence="1">Catalyzes the FAD-dependent oxidative deamination of glycine. Is essential for thiamine biosynthesis since the oxidation of glycine catalyzed by ThiO generates the glycine imine intermediate (dehydroglycine) required for the biosynthesis of the thiazole ring of thiamine pyrophosphate.</text>
</comment>
<comment type="function">
    <text evidence="1">Catalyzes the rearrangement of 1-deoxy-D-xylulose 5-phosphate (DXP) to produce the thiazole phosphate moiety of thiamine. Sulfur is provided by the thiocarboxylate moiety of the carrier protein ThiS. In vitro, sulfur can be provided by H(2)S.</text>
</comment>
<comment type="catalytic activity">
    <reaction>
        <text>glycine + O2 + H2O = glyoxylate + H2O2 + NH4(+)</text>
        <dbReference type="Rhea" id="RHEA:11532"/>
        <dbReference type="ChEBI" id="CHEBI:15377"/>
        <dbReference type="ChEBI" id="CHEBI:15379"/>
        <dbReference type="ChEBI" id="CHEBI:16240"/>
        <dbReference type="ChEBI" id="CHEBI:28938"/>
        <dbReference type="ChEBI" id="CHEBI:36655"/>
        <dbReference type="ChEBI" id="CHEBI:57305"/>
        <dbReference type="EC" id="1.4.3.19"/>
    </reaction>
</comment>
<comment type="catalytic activity">
    <reaction>
        <text>[ThiS sulfur-carrier protein]-C-terminal-Gly-aminoethanethioate + 2-iminoacetate + 1-deoxy-D-xylulose 5-phosphate = [ThiS sulfur-carrier protein]-C-terminal Gly-Gly + 2-[(2R,5Z)-2-carboxy-4-methylthiazol-5(2H)-ylidene]ethyl phosphate + 2 H2O + H(+)</text>
        <dbReference type="Rhea" id="RHEA:26297"/>
        <dbReference type="Rhea" id="RHEA-COMP:12909"/>
        <dbReference type="Rhea" id="RHEA-COMP:19908"/>
        <dbReference type="ChEBI" id="CHEBI:15377"/>
        <dbReference type="ChEBI" id="CHEBI:15378"/>
        <dbReference type="ChEBI" id="CHEBI:57792"/>
        <dbReference type="ChEBI" id="CHEBI:62899"/>
        <dbReference type="ChEBI" id="CHEBI:77846"/>
        <dbReference type="ChEBI" id="CHEBI:90778"/>
        <dbReference type="ChEBI" id="CHEBI:232372"/>
        <dbReference type="EC" id="2.8.1.10"/>
    </reaction>
</comment>
<comment type="cofactor">
    <cofactor evidence="1">
        <name>FAD</name>
        <dbReference type="ChEBI" id="CHEBI:57692"/>
    </cofactor>
</comment>
<comment type="pathway">
    <text>Cofactor biosynthesis; thiamine diphosphate biosynthesis.</text>
</comment>
<comment type="subunit">
    <text evidence="1">Interacts with ThiH and ThiS.</text>
</comment>
<comment type="subcellular location">
    <subcellularLocation>
        <location evidence="1">Cytoplasm</location>
    </subcellularLocation>
</comment>
<comment type="similarity">
    <text evidence="2">In the N-terminal section; belongs to the DAO family. ThiO subfamily.</text>
</comment>
<comment type="similarity">
    <text evidence="2">In the C-terminal section; belongs to the ThiG family.</text>
</comment>
<accession>Q8YRC9</accession>
<sequence>MTRDIVIIGGGVIGLAIAVELKLRGAEVTVICRDFQAAAAHAAAGMLAPDAEQITDGAMKSLCWRSRSLYSEWTSKLEDLTGLNTGYWPCGILAPIYEGQESKGVRVQEGEGESPAYWLEKAAIHQYQPGLGEDVVGGWWYPEDAQVNNQALARVLWAAAESLGVELKDGITVEGLLQQQGQVVGVQTNTGIIRAEHYVLATGAWANELLPLPVTPRKGQMLRLRVPESVPELPLKRVLFGKNIYIVPRRERSIIVGATSEDVGFTPHNTPAGIQTLLQGAIRLYPQLQDYPIQEFWWGFRPATPDELPILGTSHCPNLTLATGHYRNGILLAPITAALIADLIVEQKSDPLLSHFHYSRSQKQASTIPMLTHSANFSNGHTKNPPLPTLDSPLIIAGKSFHSRLMTGTGKYRSIEEMQQSVVASGCEIVTVAVRRVQTKTPGHEGLAEALDWSKIWMLPNTAGCQTAEEAIRVARLGREMAKLLGQEDNNFVKLEVIPDPKYLLPDPIGTLQAAEQLVKEGFAVLPYINADPMLAKHLEDVGCATVMPLASPIGSGQGLKTTANIQIIIENAKIPVVVDAGIGAPSEASQAMELGADALLINSAIALAQNPAAMAQAMNLATVAGRLAYLAGRMPMKTYASASSPVTGTIS</sequence>
<feature type="chain" id="PRO_0000162776" description="Bifunctional protein ThiO/ThiG">
    <location>
        <begin position="1"/>
        <end position="652"/>
    </location>
</feature>
<feature type="region of interest" description="ThiO">
    <location>
        <begin position="1"/>
        <end position="366"/>
    </location>
</feature>
<feature type="region of interest" description="ThiG">
    <location>
        <begin position="393"/>
        <end position="652"/>
    </location>
</feature>
<feature type="active site" description="Schiff-base intermediate with DXP" evidence="1">
    <location>
        <position position="494"/>
    </location>
</feature>
<feature type="binding site" evidence="1">
    <location>
        <begin position="5"/>
        <end position="19"/>
    </location>
    <ligand>
        <name>FAD</name>
        <dbReference type="ChEBI" id="CHEBI:57692"/>
    </ligand>
</feature>
<feature type="binding site" evidence="1">
    <location>
        <begin position="44"/>
        <end position="46"/>
    </location>
    <ligand>
        <name>FAD</name>
        <dbReference type="ChEBI" id="CHEBI:57692"/>
    </ligand>
</feature>
<feature type="binding site" evidence="1">
    <location>
        <position position="52"/>
    </location>
    <ligand>
        <name>glycine</name>
        <dbReference type="ChEBI" id="CHEBI:57305"/>
    </ligand>
</feature>
<feature type="binding site" evidence="1">
    <location>
        <position position="173"/>
    </location>
    <ligand>
        <name>FAD</name>
        <dbReference type="ChEBI" id="CHEBI:57692"/>
    </ligand>
</feature>
<feature type="binding site" evidence="1">
    <location>
        <position position="301"/>
    </location>
    <ligand>
        <name>glycine</name>
        <dbReference type="ChEBI" id="CHEBI:57305"/>
    </ligand>
</feature>
<feature type="binding site" evidence="1">
    <location>
        <begin position="325"/>
        <end position="331"/>
    </location>
    <ligand>
        <name>FAD</name>
        <dbReference type="ChEBI" id="CHEBI:57692"/>
    </ligand>
</feature>
<feature type="binding site" evidence="1">
    <location>
        <position position="327"/>
    </location>
    <ligand>
        <name>glycine</name>
        <dbReference type="ChEBI" id="CHEBI:57305"/>
    </ligand>
</feature>
<feature type="binding site" evidence="1">
    <location>
        <position position="555"/>
    </location>
    <ligand>
        <name>1-deoxy-D-xylulose 5-phosphate</name>
        <dbReference type="ChEBI" id="CHEBI:57792"/>
    </ligand>
</feature>
<feature type="binding site" evidence="1">
    <location>
        <begin position="581"/>
        <end position="582"/>
    </location>
    <ligand>
        <name>1-deoxy-D-xylulose 5-phosphate</name>
        <dbReference type="ChEBI" id="CHEBI:57792"/>
    </ligand>
</feature>
<feature type="binding site" evidence="1">
    <location>
        <begin position="603"/>
        <end position="604"/>
    </location>
    <ligand>
        <name>1-deoxy-D-xylulose 5-phosphate</name>
        <dbReference type="ChEBI" id="CHEBI:57792"/>
    </ligand>
</feature>
<protein>
    <recommendedName>
        <fullName>Bifunctional protein ThiO/ThiG</fullName>
    </recommendedName>
    <domain>
        <recommendedName>
            <fullName>Probable FAD-dependent glycine oxidase</fullName>
            <ecNumber>1.4.3.19</ecNumber>
        </recommendedName>
    </domain>
    <domain>
        <recommendedName>
            <fullName>Thiazole synthase</fullName>
            <ecNumber>2.8.1.10</ecNumber>
        </recommendedName>
    </domain>
</protein>
<proteinExistence type="inferred from homology"/>
<gene>
    <name type="primary">thiO/thiG</name>
    <name type="ordered locus">all3519</name>
</gene>
<organism>
    <name type="scientific">Nostoc sp. (strain PCC 7120 / SAG 25.82 / UTEX 2576)</name>
    <dbReference type="NCBI Taxonomy" id="103690"/>
    <lineage>
        <taxon>Bacteria</taxon>
        <taxon>Bacillati</taxon>
        <taxon>Cyanobacteriota</taxon>
        <taxon>Cyanophyceae</taxon>
        <taxon>Nostocales</taxon>
        <taxon>Nostocaceae</taxon>
        <taxon>Nostoc</taxon>
    </lineage>
</organism>
<evidence type="ECO:0000250" key="1"/>
<evidence type="ECO:0000305" key="2"/>
<dbReference type="EC" id="1.4.3.19"/>
<dbReference type="EC" id="2.8.1.10"/>
<dbReference type="EMBL" id="BA000019">
    <property type="protein sequence ID" value="BAB75218.1"/>
    <property type="molecule type" value="Genomic_DNA"/>
</dbReference>
<dbReference type="PIR" id="AH2245">
    <property type="entry name" value="AH2245"/>
</dbReference>
<dbReference type="SMR" id="Q8YRC9"/>
<dbReference type="STRING" id="103690.gene:10495559"/>
<dbReference type="KEGG" id="ana:all3519"/>
<dbReference type="eggNOG" id="COG0665">
    <property type="taxonomic scope" value="Bacteria"/>
</dbReference>
<dbReference type="eggNOG" id="COG2022">
    <property type="taxonomic scope" value="Bacteria"/>
</dbReference>
<dbReference type="OrthoDB" id="9805935at2"/>
<dbReference type="UniPathway" id="UPA00060"/>
<dbReference type="Proteomes" id="UP000002483">
    <property type="component" value="Chromosome"/>
</dbReference>
<dbReference type="GO" id="GO:0005737">
    <property type="term" value="C:cytoplasm"/>
    <property type="evidence" value="ECO:0007669"/>
    <property type="project" value="UniProtKB-SubCell"/>
</dbReference>
<dbReference type="GO" id="GO:0050660">
    <property type="term" value="F:flavin adenine dinucleotide binding"/>
    <property type="evidence" value="ECO:0007669"/>
    <property type="project" value="InterPro"/>
</dbReference>
<dbReference type="GO" id="GO:0043799">
    <property type="term" value="F:glycine oxidase activity"/>
    <property type="evidence" value="ECO:0007669"/>
    <property type="project" value="UniProtKB-EC"/>
</dbReference>
<dbReference type="GO" id="GO:1990107">
    <property type="term" value="F:thiazole synthase activity"/>
    <property type="evidence" value="ECO:0007669"/>
    <property type="project" value="UniProtKB-EC"/>
</dbReference>
<dbReference type="GO" id="GO:0009229">
    <property type="term" value="P:thiamine diphosphate biosynthetic process"/>
    <property type="evidence" value="ECO:0007669"/>
    <property type="project" value="UniProtKB-UniRule"/>
</dbReference>
<dbReference type="CDD" id="cd04728">
    <property type="entry name" value="ThiG"/>
    <property type="match status" value="1"/>
</dbReference>
<dbReference type="Gene3D" id="3.20.20.70">
    <property type="entry name" value="Aldolase class I"/>
    <property type="match status" value="1"/>
</dbReference>
<dbReference type="Gene3D" id="3.30.9.10">
    <property type="entry name" value="D-Amino Acid Oxidase, subunit A, domain 2"/>
    <property type="match status" value="1"/>
</dbReference>
<dbReference type="Gene3D" id="3.50.50.60">
    <property type="entry name" value="FAD/NAD(P)-binding domain"/>
    <property type="match status" value="1"/>
</dbReference>
<dbReference type="HAMAP" id="MF_00443">
    <property type="entry name" value="ThiG"/>
    <property type="match status" value="1"/>
</dbReference>
<dbReference type="InterPro" id="IPR013785">
    <property type="entry name" value="Aldolase_TIM"/>
</dbReference>
<dbReference type="InterPro" id="IPR006076">
    <property type="entry name" value="FAD-dep_OxRdtase"/>
</dbReference>
<dbReference type="InterPro" id="IPR036188">
    <property type="entry name" value="FAD/NAD-bd_sf"/>
</dbReference>
<dbReference type="InterPro" id="IPR012727">
    <property type="entry name" value="Gly_oxidase_ThiO"/>
</dbReference>
<dbReference type="InterPro" id="IPR033983">
    <property type="entry name" value="Thiazole_synthase_ThiG"/>
</dbReference>
<dbReference type="InterPro" id="IPR008867">
    <property type="entry name" value="ThiG"/>
</dbReference>
<dbReference type="NCBIfam" id="TIGR02352">
    <property type="entry name" value="thiamin_ThiO"/>
    <property type="match status" value="1"/>
</dbReference>
<dbReference type="PANTHER" id="PTHR34266">
    <property type="entry name" value="THIAZOLE SYNTHASE"/>
    <property type="match status" value="1"/>
</dbReference>
<dbReference type="PANTHER" id="PTHR34266:SF2">
    <property type="entry name" value="THIAZOLE SYNTHASE"/>
    <property type="match status" value="1"/>
</dbReference>
<dbReference type="Pfam" id="PF01266">
    <property type="entry name" value="DAO"/>
    <property type="match status" value="1"/>
</dbReference>
<dbReference type="Pfam" id="PF05690">
    <property type="entry name" value="ThiG"/>
    <property type="match status" value="1"/>
</dbReference>
<dbReference type="SUPFAM" id="SSF54373">
    <property type="entry name" value="FAD-linked reductases, C-terminal domain"/>
    <property type="match status" value="1"/>
</dbReference>
<dbReference type="SUPFAM" id="SSF51905">
    <property type="entry name" value="FAD/NAD(P)-binding domain"/>
    <property type="match status" value="1"/>
</dbReference>
<dbReference type="SUPFAM" id="SSF110399">
    <property type="entry name" value="ThiG-like"/>
    <property type="match status" value="1"/>
</dbReference>
<reference key="1">
    <citation type="journal article" date="2001" name="DNA Res.">
        <title>Complete genomic sequence of the filamentous nitrogen-fixing cyanobacterium Anabaena sp. strain PCC 7120.</title>
        <authorList>
            <person name="Kaneko T."/>
            <person name="Nakamura Y."/>
            <person name="Wolk C.P."/>
            <person name="Kuritz T."/>
            <person name="Sasamoto S."/>
            <person name="Watanabe A."/>
            <person name="Iriguchi M."/>
            <person name="Ishikawa A."/>
            <person name="Kawashima K."/>
            <person name="Kimura T."/>
            <person name="Kishida Y."/>
            <person name="Kohara M."/>
            <person name="Matsumoto M."/>
            <person name="Matsuno A."/>
            <person name="Muraki A."/>
            <person name="Nakazaki N."/>
            <person name="Shimpo S."/>
            <person name="Sugimoto M."/>
            <person name="Takazawa M."/>
            <person name="Yamada M."/>
            <person name="Yasuda M."/>
            <person name="Tabata S."/>
        </authorList>
    </citation>
    <scope>NUCLEOTIDE SEQUENCE [LARGE SCALE GENOMIC DNA]</scope>
    <source>
        <strain>PCC 7120 / SAG 25.82 / UTEX 2576</strain>
    </source>
</reference>